<proteinExistence type="inferred from homology"/>
<dbReference type="EC" id="3.5.2.7" evidence="1"/>
<dbReference type="EMBL" id="AB039932">
    <property type="protein sequence ID" value="BAA97750.1"/>
    <property type="status" value="ALT_INIT"/>
    <property type="molecule type" value="Genomic_DNA"/>
</dbReference>
<dbReference type="EMBL" id="AP002086">
    <property type="protein sequence ID" value="BAB16158.1"/>
    <property type="status" value="ALT_INIT"/>
    <property type="molecule type" value="Genomic_DNA"/>
</dbReference>
<dbReference type="RefSeq" id="NP_066620.1">
    <property type="nucleotide sequence ID" value="NC_002575.1"/>
</dbReference>
<dbReference type="SMR" id="Q9KWE5"/>
<dbReference type="UniPathway" id="UPA00379">
    <property type="reaction ID" value="UER00551"/>
</dbReference>
<dbReference type="GO" id="GO:0005737">
    <property type="term" value="C:cytoplasm"/>
    <property type="evidence" value="ECO:0007669"/>
    <property type="project" value="UniProtKB-SubCell"/>
</dbReference>
<dbReference type="GO" id="GO:0050480">
    <property type="term" value="F:imidazolonepropionase activity"/>
    <property type="evidence" value="ECO:0007669"/>
    <property type="project" value="UniProtKB-UniRule"/>
</dbReference>
<dbReference type="GO" id="GO:0005506">
    <property type="term" value="F:iron ion binding"/>
    <property type="evidence" value="ECO:0007669"/>
    <property type="project" value="UniProtKB-UniRule"/>
</dbReference>
<dbReference type="GO" id="GO:0008270">
    <property type="term" value="F:zinc ion binding"/>
    <property type="evidence" value="ECO:0007669"/>
    <property type="project" value="UniProtKB-UniRule"/>
</dbReference>
<dbReference type="GO" id="GO:0019556">
    <property type="term" value="P:L-histidine catabolic process to glutamate and formamide"/>
    <property type="evidence" value="ECO:0007669"/>
    <property type="project" value="UniProtKB-UniPathway"/>
</dbReference>
<dbReference type="GO" id="GO:0019557">
    <property type="term" value="P:L-histidine catabolic process to glutamate and formate"/>
    <property type="evidence" value="ECO:0007669"/>
    <property type="project" value="UniProtKB-UniPathway"/>
</dbReference>
<dbReference type="CDD" id="cd01296">
    <property type="entry name" value="Imidazolone-5PH"/>
    <property type="match status" value="1"/>
</dbReference>
<dbReference type="FunFam" id="3.20.20.140:FF:000007">
    <property type="entry name" value="Imidazolonepropionase"/>
    <property type="match status" value="1"/>
</dbReference>
<dbReference type="Gene3D" id="3.20.20.140">
    <property type="entry name" value="Metal-dependent hydrolases"/>
    <property type="match status" value="1"/>
</dbReference>
<dbReference type="Gene3D" id="2.30.40.10">
    <property type="entry name" value="Urease, subunit C, domain 1"/>
    <property type="match status" value="1"/>
</dbReference>
<dbReference type="HAMAP" id="MF_00372">
    <property type="entry name" value="HutI"/>
    <property type="match status" value="1"/>
</dbReference>
<dbReference type="InterPro" id="IPR006680">
    <property type="entry name" value="Amidohydro-rel"/>
</dbReference>
<dbReference type="InterPro" id="IPR005920">
    <property type="entry name" value="HutI"/>
</dbReference>
<dbReference type="InterPro" id="IPR011059">
    <property type="entry name" value="Metal-dep_hydrolase_composite"/>
</dbReference>
<dbReference type="InterPro" id="IPR032466">
    <property type="entry name" value="Metal_Hydrolase"/>
</dbReference>
<dbReference type="NCBIfam" id="TIGR01224">
    <property type="entry name" value="hutI"/>
    <property type="match status" value="1"/>
</dbReference>
<dbReference type="PANTHER" id="PTHR42752">
    <property type="entry name" value="IMIDAZOLONEPROPIONASE"/>
    <property type="match status" value="1"/>
</dbReference>
<dbReference type="PANTHER" id="PTHR42752:SF1">
    <property type="entry name" value="IMIDAZOLONEPROPIONASE-RELATED"/>
    <property type="match status" value="1"/>
</dbReference>
<dbReference type="Pfam" id="PF01979">
    <property type="entry name" value="Amidohydro_1"/>
    <property type="match status" value="1"/>
</dbReference>
<dbReference type="SUPFAM" id="SSF51338">
    <property type="entry name" value="Composite domain of metallo-dependent hydrolases"/>
    <property type="match status" value="1"/>
</dbReference>
<dbReference type="SUPFAM" id="SSF51556">
    <property type="entry name" value="Metallo-dependent hydrolases"/>
    <property type="match status" value="1"/>
</dbReference>
<gene>
    <name evidence="1" type="primary">hutI</name>
    <name type="ORF">riorf39</name>
</gene>
<comment type="function">
    <text evidence="1">Catalyzes the hydrolytic cleavage of the carbon-nitrogen bond in imidazolone-5-propanoate to yield N-formimidoyl-L-glutamate. It is the third step in the universal histidine degradation pathway.</text>
</comment>
<comment type="catalytic activity">
    <reaction evidence="1">
        <text>4-imidazolone-5-propanoate + H2O = N-formimidoyl-L-glutamate</text>
        <dbReference type="Rhea" id="RHEA:23660"/>
        <dbReference type="ChEBI" id="CHEBI:15377"/>
        <dbReference type="ChEBI" id="CHEBI:58928"/>
        <dbReference type="ChEBI" id="CHEBI:77893"/>
        <dbReference type="EC" id="3.5.2.7"/>
    </reaction>
</comment>
<comment type="cofactor">
    <cofactor evidence="1">
        <name>Zn(2+)</name>
        <dbReference type="ChEBI" id="CHEBI:29105"/>
    </cofactor>
    <cofactor evidence="1">
        <name>Fe(3+)</name>
        <dbReference type="ChEBI" id="CHEBI:29034"/>
    </cofactor>
    <text evidence="1">Binds 1 zinc or iron ion per subunit.</text>
</comment>
<comment type="pathway">
    <text evidence="1">Amino-acid degradation; L-histidine degradation into L-glutamate; N-formimidoyl-L-glutamate from L-histidine: step 3/3.</text>
</comment>
<comment type="subcellular location">
    <subcellularLocation>
        <location evidence="1">Cytoplasm</location>
    </subcellularLocation>
</comment>
<comment type="similarity">
    <text evidence="1">Belongs to the metallo-dependent hydrolases superfamily. HutI family.</text>
</comment>
<comment type="sequence caution" evidence="2">
    <conflict type="erroneous initiation">
        <sequence resource="EMBL-CDS" id="BAA97750"/>
    </conflict>
</comment>
<comment type="sequence caution" evidence="2">
    <conflict type="erroneous initiation">
        <sequence resource="EMBL-CDS" id="BAB16158"/>
    </conflict>
</comment>
<organism>
    <name type="scientific">Rhizobium rhizogenes</name>
    <name type="common">Agrobacterium rhizogenes</name>
    <dbReference type="NCBI Taxonomy" id="359"/>
    <lineage>
        <taxon>Bacteria</taxon>
        <taxon>Pseudomonadati</taxon>
        <taxon>Pseudomonadota</taxon>
        <taxon>Alphaproteobacteria</taxon>
        <taxon>Hyphomicrobiales</taxon>
        <taxon>Rhizobiaceae</taxon>
        <taxon>Rhizobium/Agrobacterium group</taxon>
        <taxon>Rhizobium</taxon>
    </lineage>
</organism>
<sequence length="407" mass="43511">MIGASKLIRIWINARVYPAIAGAEIINDAVIVAKEGRLTFVGPASALSIDDRDAETIDCGGRLITPGLVDCHTHIVFGGDRAMEFEMRLEGSTYEEVARAGGGIVSSVKATNALTVDQLVQASLPRVDTLLSEGVSTLEIKSGYGLTIEGELNILRAARALEKVRPVRVVTSYLAAHATPPEYKGRHADYIADVVLPGMDRGHAEKLIDAVDGFCEGIAFTVDEMRRVFNHAKVLGIPVKLHAEQLSNLGGAKMAASYGALSADHLEYLDKEGAEAMAKAGTVAVILPGAFYAINETRKPPIQTLRDAGVRMAIATDCNPGTSPLTSLLLTMNMSATLFRLTVEECICGATREAARALGILDTTGTLEVGKSADLAIWNIERPAELVYRIGFNPLHSRVFKGKQVST</sequence>
<evidence type="ECO:0000255" key="1">
    <source>
        <dbReference type="HAMAP-Rule" id="MF_00372"/>
    </source>
</evidence>
<evidence type="ECO:0000305" key="2"/>
<feature type="chain" id="PRO_0000160941" description="Imidazolonepropionase">
    <location>
        <begin position="1"/>
        <end position="407"/>
    </location>
</feature>
<feature type="binding site" evidence="1">
    <location>
        <position position="72"/>
    </location>
    <ligand>
        <name>Fe(3+)</name>
        <dbReference type="ChEBI" id="CHEBI:29034"/>
    </ligand>
</feature>
<feature type="binding site" evidence="1">
    <location>
        <position position="72"/>
    </location>
    <ligand>
        <name>Zn(2+)</name>
        <dbReference type="ChEBI" id="CHEBI:29105"/>
    </ligand>
</feature>
<feature type="binding site" evidence="1">
    <location>
        <position position="74"/>
    </location>
    <ligand>
        <name>Fe(3+)</name>
        <dbReference type="ChEBI" id="CHEBI:29034"/>
    </ligand>
</feature>
<feature type="binding site" evidence="1">
    <location>
        <position position="74"/>
    </location>
    <ligand>
        <name>Zn(2+)</name>
        <dbReference type="ChEBI" id="CHEBI:29105"/>
    </ligand>
</feature>
<feature type="binding site" evidence="1">
    <location>
        <position position="81"/>
    </location>
    <ligand>
        <name>4-imidazolone-5-propanoate</name>
        <dbReference type="ChEBI" id="CHEBI:77893"/>
    </ligand>
</feature>
<feature type="binding site" evidence="1">
    <location>
        <position position="144"/>
    </location>
    <ligand>
        <name>4-imidazolone-5-propanoate</name>
        <dbReference type="ChEBI" id="CHEBI:77893"/>
    </ligand>
</feature>
<feature type="binding site" evidence="1">
    <location>
        <position position="144"/>
    </location>
    <ligand>
        <name>N-formimidoyl-L-glutamate</name>
        <dbReference type="ChEBI" id="CHEBI:58928"/>
    </ligand>
</feature>
<feature type="binding site" evidence="1">
    <location>
        <position position="177"/>
    </location>
    <ligand>
        <name>4-imidazolone-5-propanoate</name>
        <dbReference type="ChEBI" id="CHEBI:77893"/>
    </ligand>
</feature>
<feature type="binding site" evidence="1">
    <location>
        <position position="242"/>
    </location>
    <ligand>
        <name>Fe(3+)</name>
        <dbReference type="ChEBI" id="CHEBI:29034"/>
    </ligand>
</feature>
<feature type="binding site" evidence="1">
    <location>
        <position position="242"/>
    </location>
    <ligand>
        <name>Zn(2+)</name>
        <dbReference type="ChEBI" id="CHEBI:29105"/>
    </ligand>
</feature>
<feature type="binding site" evidence="1">
    <location>
        <position position="245"/>
    </location>
    <ligand>
        <name>4-imidazolone-5-propanoate</name>
        <dbReference type="ChEBI" id="CHEBI:77893"/>
    </ligand>
</feature>
<feature type="binding site" evidence="1">
    <location>
        <position position="317"/>
    </location>
    <ligand>
        <name>Fe(3+)</name>
        <dbReference type="ChEBI" id="CHEBI:29034"/>
    </ligand>
</feature>
<feature type="binding site" evidence="1">
    <location>
        <position position="317"/>
    </location>
    <ligand>
        <name>Zn(2+)</name>
        <dbReference type="ChEBI" id="CHEBI:29105"/>
    </ligand>
</feature>
<feature type="binding site" evidence="1">
    <location>
        <position position="319"/>
    </location>
    <ligand>
        <name>N-formimidoyl-L-glutamate</name>
        <dbReference type="ChEBI" id="CHEBI:58928"/>
    </ligand>
</feature>
<feature type="binding site" evidence="1">
    <location>
        <position position="321"/>
    </location>
    <ligand>
        <name>N-formimidoyl-L-glutamate</name>
        <dbReference type="ChEBI" id="CHEBI:58928"/>
    </ligand>
</feature>
<feature type="binding site" evidence="1">
    <location>
        <position position="322"/>
    </location>
    <ligand>
        <name>4-imidazolone-5-propanoate</name>
        <dbReference type="ChEBI" id="CHEBI:77893"/>
    </ligand>
</feature>
<geneLocation type="plasmid">
    <name>pRi1724</name>
</geneLocation>
<protein>
    <recommendedName>
        <fullName evidence="1">Imidazolonepropionase</fullName>
        <ecNumber evidence="1">3.5.2.7</ecNumber>
    </recommendedName>
    <alternativeName>
        <fullName evidence="1">Imidazolone-5-propionate hydrolase</fullName>
    </alternativeName>
</protein>
<keyword id="KW-0963">Cytoplasm</keyword>
<keyword id="KW-0369">Histidine metabolism</keyword>
<keyword id="KW-0378">Hydrolase</keyword>
<keyword id="KW-0408">Iron</keyword>
<keyword id="KW-0479">Metal-binding</keyword>
<keyword id="KW-0614">Plasmid</keyword>
<keyword id="KW-0862">Zinc</keyword>
<accession>Q9KWE5</accession>
<name>HUTI_RHIRH</name>
<reference key="1">
    <citation type="journal article" date="2000" name="DNA Res.">
        <title>Analysis of unique variable region of a plant root inducing plasmid, pRi1724, by the construction of its physical map and library.</title>
        <authorList>
            <person name="Moriguchi K."/>
            <person name="Maeda Y."/>
            <person name="Satou M."/>
            <person name="Kataoka M."/>
            <person name="Tanaka N."/>
            <person name="Yoshida K."/>
        </authorList>
    </citation>
    <scope>NUCLEOTIDE SEQUENCE [GENOMIC DNA]</scope>
    <source>
        <strain>MAFF03-01724</strain>
    </source>
</reference>
<reference key="2">
    <citation type="journal article" date="2001" name="J. Mol. Biol.">
        <title>The complete nucleotide sequence of a plant root-inducing (Ri) plasmid indicates its chimeric structure and evolutionary relationship between tumor-inducing (Ti) and symbiotic (Sym) plasmids in Rhizobiaceae.</title>
        <authorList>
            <person name="Moriguchi K."/>
            <person name="Maeda Y."/>
            <person name="Satou M."/>
            <person name="Hardayani N.S.N."/>
            <person name="Kataoka M."/>
            <person name="Tanaka N."/>
            <person name="Yoshida K."/>
        </authorList>
    </citation>
    <scope>NUCLEOTIDE SEQUENCE [GENOMIC DNA]</scope>
    <source>
        <strain>MAFF03-01724</strain>
    </source>
</reference>